<organism>
    <name type="scientific">Schizosaccharomyces pombe (strain 972 / ATCC 24843)</name>
    <name type="common">Fission yeast</name>
    <dbReference type="NCBI Taxonomy" id="284812"/>
    <lineage>
        <taxon>Eukaryota</taxon>
        <taxon>Fungi</taxon>
        <taxon>Dikarya</taxon>
        <taxon>Ascomycota</taxon>
        <taxon>Taphrinomycotina</taxon>
        <taxon>Schizosaccharomycetes</taxon>
        <taxon>Schizosaccharomycetales</taxon>
        <taxon>Schizosaccharomycetaceae</taxon>
        <taxon>Schizosaccharomyces</taxon>
    </lineage>
</organism>
<feature type="chain" id="PRO_0000303950" description="PWWP domain-containing protein 1">
    <location>
        <begin position="1"/>
        <end position="359"/>
    </location>
</feature>
<feature type="domain" description="PWWP" evidence="1">
    <location>
        <begin position="52"/>
        <end position="114"/>
    </location>
</feature>
<feature type="region of interest" description="Disordered" evidence="2">
    <location>
        <begin position="1"/>
        <end position="37"/>
    </location>
</feature>
<feature type="region of interest" description="Disordered" evidence="2">
    <location>
        <begin position="133"/>
        <end position="161"/>
    </location>
</feature>
<feature type="region of interest" description="Disordered" evidence="2">
    <location>
        <begin position="204"/>
        <end position="255"/>
    </location>
</feature>
<feature type="compositionally biased region" description="Polar residues" evidence="2">
    <location>
        <begin position="204"/>
        <end position="224"/>
    </location>
</feature>
<feature type="modified residue" description="Phosphoserine" evidence="5">
    <location>
        <position position="252"/>
    </location>
</feature>
<feature type="mutagenesis site" description="Reduces the association of set9 with nucleosome and the H4K20me3 levels." evidence="6">
    <original>W</original>
    <variation>A</variation>
    <location>
        <position position="66"/>
    </location>
</feature>
<feature type="mutagenesis site" description="Reduces the association of set9 with nucleosome and the H4K20me3 levels." evidence="6">
    <original>F</original>
    <variation>A</variation>
    <location>
        <position position="94"/>
    </location>
</feature>
<feature type="strand" evidence="7">
    <location>
        <begin position="54"/>
        <end position="59"/>
    </location>
</feature>
<feature type="strand" evidence="7">
    <location>
        <begin position="61"/>
        <end position="63"/>
    </location>
</feature>
<feature type="strand" evidence="7">
    <location>
        <begin position="65"/>
        <end position="80"/>
    </location>
</feature>
<feature type="strand" evidence="7">
    <location>
        <begin position="82"/>
        <end position="84"/>
    </location>
</feature>
<feature type="strand" evidence="7">
    <location>
        <begin position="86"/>
        <end position="94"/>
    </location>
</feature>
<feature type="turn" evidence="7">
    <location>
        <begin position="95"/>
        <end position="98"/>
    </location>
</feature>
<feature type="strand" evidence="7">
    <location>
        <begin position="99"/>
        <end position="103"/>
    </location>
</feature>
<feature type="helix" evidence="7">
    <location>
        <begin position="105"/>
        <end position="107"/>
    </location>
</feature>
<feature type="strand" evidence="7">
    <location>
        <begin position="108"/>
        <end position="110"/>
    </location>
</feature>
<feature type="helix" evidence="7">
    <location>
        <begin position="113"/>
        <end position="121"/>
    </location>
</feature>
<feature type="strand" evidence="7">
    <location>
        <begin position="123"/>
        <end position="125"/>
    </location>
</feature>
<feature type="helix" evidence="7">
    <location>
        <begin position="128"/>
        <end position="137"/>
    </location>
</feature>
<feature type="helix" evidence="7">
    <location>
        <begin position="140"/>
        <end position="142"/>
    </location>
</feature>
<accession>O59676</accession>
<accession>Q9USE8</accession>
<sequence length="359" mass="40923">MNNARTNAKRRRLSSKQGGLSISEGKESNIPSVVEESKDNLEQASADDRLNFGDRILVKAPGYPWWPALLLRRKETKDSLNTNSSFNVLYKVLFFPDFNFAWVKRNSVKPLLDSEIAKFLGSSKRKSKELIEAYEASKTPPDLKEESSTDEEMDSLSAAEEKPNFLQKRKYHWETSLDESDAESISSGSLMSITSISEMYGPTVASTSRSSTQLSDQRYPLSSNFDHRGEAKGKGKQPLKNPQERGRISPSSPLNDQTKALMQRLLFFRHKLQKAFLSPDHLIVEEDFYNASKYLNAISDIPFLNYELITSTKLAKVLKRIAFLEHLENDELYDIRQKCKNLLYSWAMFLPNEPSIKGM</sequence>
<gene>
    <name type="primary">pdp1</name>
    <name type="ORF">SPBC29A3.13</name>
</gene>
<comment type="function">
    <text evidence="6">Necessary for DNA damage checkpoint activation. Required for the association of set9 with chromatin and subsequent methylation of H4K20. Associates with H4K20me1 to increase the concentration of set9 on chromatin to perform H4K20me3. H4K20me3 is mainly enriched at heterochromatin and is required for proper heterochromatin assembly.</text>
</comment>
<comment type="subunit">
    <text evidence="6">Interacts with set9 and histone H4K20me1. Associates with nucleosomes.</text>
</comment>
<comment type="subcellular location">
    <subcellularLocation>
        <location evidence="3 4">Nucleus</location>
    </subcellularLocation>
</comment>
<comment type="domain">
    <text evidence="6">The C-terminal region mediates association with set9, whereas the N-terminal PWWP domain recognizes H4K20me1.</text>
</comment>
<evidence type="ECO:0000255" key="1">
    <source>
        <dbReference type="PROSITE-ProRule" id="PRU00162"/>
    </source>
</evidence>
<evidence type="ECO:0000256" key="2">
    <source>
        <dbReference type="SAM" id="MobiDB-lite"/>
    </source>
</evidence>
<evidence type="ECO:0000269" key="3">
    <source>
    </source>
</evidence>
<evidence type="ECO:0000269" key="4">
    <source>
    </source>
</evidence>
<evidence type="ECO:0000269" key="5">
    <source>
    </source>
</evidence>
<evidence type="ECO:0000269" key="6">
    <source>
    </source>
</evidence>
<evidence type="ECO:0007829" key="7">
    <source>
        <dbReference type="PDB" id="2L89"/>
    </source>
</evidence>
<proteinExistence type="evidence at protein level"/>
<protein>
    <recommendedName>
        <fullName>PWWP domain-containing protein 1</fullName>
    </recommendedName>
    <alternativeName>
        <fullName>Set9-associated factor pdp1</fullName>
    </alternativeName>
</protein>
<reference key="1">
    <citation type="journal article" date="2002" name="Nature">
        <title>The genome sequence of Schizosaccharomyces pombe.</title>
        <authorList>
            <person name="Wood V."/>
            <person name="Gwilliam R."/>
            <person name="Rajandream M.A."/>
            <person name="Lyne M.H."/>
            <person name="Lyne R."/>
            <person name="Stewart A."/>
            <person name="Sgouros J.G."/>
            <person name="Peat N."/>
            <person name="Hayles J."/>
            <person name="Baker S.G."/>
            <person name="Basham D."/>
            <person name="Bowman S."/>
            <person name="Brooks K."/>
            <person name="Brown D."/>
            <person name="Brown S."/>
            <person name="Chillingworth T."/>
            <person name="Churcher C.M."/>
            <person name="Collins M."/>
            <person name="Connor R."/>
            <person name="Cronin A."/>
            <person name="Davis P."/>
            <person name="Feltwell T."/>
            <person name="Fraser A."/>
            <person name="Gentles S."/>
            <person name="Goble A."/>
            <person name="Hamlin N."/>
            <person name="Harris D.E."/>
            <person name="Hidalgo J."/>
            <person name="Hodgson G."/>
            <person name="Holroyd S."/>
            <person name="Hornsby T."/>
            <person name="Howarth S."/>
            <person name="Huckle E.J."/>
            <person name="Hunt S."/>
            <person name="Jagels K."/>
            <person name="James K.D."/>
            <person name="Jones L."/>
            <person name="Jones M."/>
            <person name="Leather S."/>
            <person name="McDonald S."/>
            <person name="McLean J."/>
            <person name="Mooney P."/>
            <person name="Moule S."/>
            <person name="Mungall K.L."/>
            <person name="Murphy L.D."/>
            <person name="Niblett D."/>
            <person name="Odell C."/>
            <person name="Oliver K."/>
            <person name="O'Neil S."/>
            <person name="Pearson D."/>
            <person name="Quail M.A."/>
            <person name="Rabbinowitsch E."/>
            <person name="Rutherford K.M."/>
            <person name="Rutter S."/>
            <person name="Saunders D."/>
            <person name="Seeger K."/>
            <person name="Sharp S."/>
            <person name="Skelton J."/>
            <person name="Simmonds M.N."/>
            <person name="Squares R."/>
            <person name="Squares S."/>
            <person name="Stevens K."/>
            <person name="Taylor K."/>
            <person name="Taylor R.G."/>
            <person name="Tivey A."/>
            <person name="Walsh S.V."/>
            <person name="Warren T."/>
            <person name="Whitehead S."/>
            <person name="Woodward J.R."/>
            <person name="Volckaert G."/>
            <person name="Aert R."/>
            <person name="Robben J."/>
            <person name="Grymonprez B."/>
            <person name="Weltjens I."/>
            <person name="Vanstreels E."/>
            <person name="Rieger M."/>
            <person name="Schaefer M."/>
            <person name="Mueller-Auer S."/>
            <person name="Gabel C."/>
            <person name="Fuchs M."/>
            <person name="Duesterhoeft A."/>
            <person name="Fritzc C."/>
            <person name="Holzer E."/>
            <person name="Moestl D."/>
            <person name="Hilbert H."/>
            <person name="Borzym K."/>
            <person name="Langer I."/>
            <person name="Beck A."/>
            <person name="Lehrach H."/>
            <person name="Reinhardt R."/>
            <person name="Pohl T.M."/>
            <person name="Eger P."/>
            <person name="Zimmermann W."/>
            <person name="Wedler H."/>
            <person name="Wambutt R."/>
            <person name="Purnelle B."/>
            <person name="Goffeau A."/>
            <person name="Cadieu E."/>
            <person name="Dreano S."/>
            <person name="Gloux S."/>
            <person name="Lelaure V."/>
            <person name="Mottier S."/>
            <person name="Galibert F."/>
            <person name="Aves S.J."/>
            <person name="Xiang Z."/>
            <person name="Hunt C."/>
            <person name="Moore K."/>
            <person name="Hurst S.M."/>
            <person name="Lucas M."/>
            <person name="Rochet M."/>
            <person name="Gaillardin C."/>
            <person name="Tallada V.A."/>
            <person name="Garzon A."/>
            <person name="Thode G."/>
            <person name="Daga R.R."/>
            <person name="Cruzado L."/>
            <person name="Jimenez J."/>
            <person name="Sanchez M."/>
            <person name="del Rey F."/>
            <person name="Benito J."/>
            <person name="Dominguez A."/>
            <person name="Revuelta J.L."/>
            <person name="Moreno S."/>
            <person name="Armstrong J."/>
            <person name="Forsburg S.L."/>
            <person name="Cerutti L."/>
            <person name="Lowe T."/>
            <person name="McCombie W.R."/>
            <person name="Paulsen I."/>
            <person name="Potashkin J."/>
            <person name="Shpakovski G.V."/>
            <person name="Ussery D."/>
            <person name="Barrell B.G."/>
            <person name="Nurse P."/>
        </authorList>
    </citation>
    <scope>NUCLEOTIDE SEQUENCE [LARGE SCALE GENOMIC DNA]</scope>
    <source>
        <strain>972 / ATCC 24843</strain>
    </source>
</reference>
<reference key="2">
    <citation type="journal article" date="2000" name="Genes Cells">
        <title>Large-scale screening of intracellular protein localization in living fission yeast cells by the use of a GFP-fusion genomic DNA library.</title>
        <authorList>
            <person name="Ding D.-Q."/>
            <person name="Tomita Y."/>
            <person name="Yamamoto A."/>
            <person name="Chikashige Y."/>
            <person name="Haraguchi T."/>
            <person name="Hiraoka Y."/>
        </authorList>
    </citation>
    <scope>NUCLEOTIDE SEQUENCE [LARGE SCALE GENOMIC DNA] OF 9-189</scope>
    <scope>SUBCELLULAR LOCATION</scope>
    <source>
        <strain>ATCC 38364 / 968</strain>
    </source>
</reference>
<reference key="3">
    <citation type="journal article" date="2006" name="Nat. Biotechnol.">
        <title>ORFeome cloning and global analysis of protein localization in the fission yeast Schizosaccharomyces pombe.</title>
        <authorList>
            <person name="Matsuyama A."/>
            <person name="Arai R."/>
            <person name="Yashiroda Y."/>
            <person name="Shirai A."/>
            <person name="Kamata A."/>
            <person name="Sekido S."/>
            <person name="Kobayashi Y."/>
            <person name="Hashimoto A."/>
            <person name="Hamamoto M."/>
            <person name="Hiraoka Y."/>
            <person name="Horinouchi S."/>
            <person name="Yoshida M."/>
        </authorList>
    </citation>
    <scope>SUBCELLULAR LOCATION [LARGE SCALE ANALYSIS]</scope>
</reference>
<reference key="4">
    <citation type="journal article" date="2008" name="J. Proteome Res.">
        <title>Phosphoproteome analysis of fission yeast.</title>
        <authorList>
            <person name="Wilson-Grady J.T."/>
            <person name="Villen J."/>
            <person name="Gygi S.P."/>
        </authorList>
    </citation>
    <scope>PHOSPHORYLATION [LARGE SCALE ANALYSIS] AT SER-252</scope>
    <scope>IDENTIFICATION BY MASS SPECTROMETRY</scope>
</reference>
<reference key="5">
    <citation type="journal article" date="2009" name="Mol. Cell">
        <title>Regulation of Set9-mediated H4K20 methylation by a PWWP domain protein.</title>
        <authorList>
            <person name="Wang Y."/>
            <person name="Reddy B."/>
            <person name="Thompson J."/>
            <person name="Wang H."/>
            <person name="Noma K."/>
            <person name="Yates J.R. III"/>
            <person name="Jia S."/>
        </authorList>
    </citation>
    <scope>IDENTIFICATION BY MASS SPECTROMETRY</scope>
    <scope>INTERACTION WITH SET9</scope>
    <scope>HISTONE-BINDING</scope>
    <scope>FUNCTION</scope>
    <scope>DOMAIN</scope>
    <scope>MUTAGENESIS OF TRP-66 AND PHE-94</scope>
</reference>
<keyword id="KW-0002">3D-structure</keyword>
<keyword id="KW-0156">Chromatin regulator</keyword>
<keyword id="KW-0227">DNA damage</keyword>
<keyword id="KW-0539">Nucleus</keyword>
<keyword id="KW-0597">Phosphoprotein</keyword>
<keyword id="KW-1185">Reference proteome</keyword>
<dbReference type="EMBL" id="CU329671">
    <property type="protein sequence ID" value="CAA18390.1"/>
    <property type="molecule type" value="Genomic_DNA"/>
</dbReference>
<dbReference type="EMBL" id="AB027814">
    <property type="protein sequence ID" value="BAA87118.1"/>
    <property type="molecule type" value="Genomic_DNA"/>
</dbReference>
<dbReference type="PIR" id="T40084">
    <property type="entry name" value="T40084"/>
</dbReference>
<dbReference type="RefSeq" id="NP_595841.1">
    <property type="nucleotide sequence ID" value="NM_001021745.2"/>
</dbReference>
<dbReference type="PDB" id="2L89">
    <property type="method" value="NMR"/>
    <property type="chains" value="A=45-152"/>
</dbReference>
<dbReference type="PDBsum" id="2L89"/>
<dbReference type="SMR" id="O59676"/>
<dbReference type="BioGRID" id="276883">
    <property type="interactions" value="50"/>
</dbReference>
<dbReference type="STRING" id="284812.O59676"/>
<dbReference type="iPTMnet" id="O59676"/>
<dbReference type="PaxDb" id="4896-SPBC29A3.13.1"/>
<dbReference type="EnsemblFungi" id="SPBC29A3.13.1">
    <property type="protein sequence ID" value="SPBC29A3.13.1:pep"/>
    <property type="gene ID" value="SPBC29A3.13"/>
</dbReference>
<dbReference type="GeneID" id="2540354"/>
<dbReference type="KEGG" id="spo:2540354"/>
<dbReference type="PomBase" id="SPBC29A3.13">
    <property type="gene designation" value="pdp1"/>
</dbReference>
<dbReference type="VEuPathDB" id="FungiDB:SPBC29A3.13"/>
<dbReference type="HOGENOM" id="CLU_740005_0_0_1"/>
<dbReference type="InParanoid" id="O59676"/>
<dbReference type="OMA" id="YLNYEMI"/>
<dbReference type="PhylomeDB" id="O59676"/>
<dbReference type="EvolutionaryTrace" id="O59676"/>
<dbReference type="PRO" id="PR:O59676"/>
<dbReference type="Proteomes" id="UP000002485">
    <property type="component" value="Chromosome II"/>
</dbReference>
<dbReference type="GO" id="GO:0033100">
    <property type="term" value="C:NuA3 histone acetyltransferase complex"/>
    <property type="evidence" value="ECO:0000266"/>
    <property type="project" value="PomBase"/>
</dbReference>
<dbReference type="GO" id="GO:0005634">
    <property type="term" value="C:nucleus"/>
    <property type="evidence" value="ECO:0007005"/>
    <property type="project" value="PomBase"/>
</dbReference>
<dbReference type="GO" id="GO:0003690">
    <property type="term" value="F:double-stranded DNA binding"/>
    <property type="evidence" value="ECO:0000314"/>
    <property type="project" value="PomBase"/>
</dbReference>
<dbReference type="GO" id="GO:0042393">
    <property type="term" value="F:histone binding"/>
    <property type="evidence" value="ECO:0000314"/>
    <property type="project" value="PomBase"/>
</dbReference>
<dbReference type="GO" id="GO:1990889">
    <property type="term" value="F:histone H4K20me3 reader activity"/>
    <property type="evidence" value="ECO:0000314"/>
    <property type="project" value="PomBase"/>
</dbReference>
<dbReference type="GO" id="GO:0035064">
    <property type="term" value="F:methylated histone binding"/>
    <property type="evidence" value="ECO:0000353"/>
    <property type="project" value="PomBase"/>
</dbReference>
<dbReference type="GO" id="GO:0006338">
    <property type="term" value="P:chromatin remodeling"/>
    <property type="evidence" value="ECO:0000255"/>
    <property type="project" value="PomBase"/>
</dbReference>
<dbReference type="GO" id="GO:0006974">
    <property type="term" value="P:DNA damage response"/>
    <property type="evidence" value="ECO:0007669"/>
    <property type="project" value="UniProtKB-KW"/>
</dbReference>
<dbReference type="GO" id="GO:0006357">
    <property type="term" value="P:regulation of transcription by RNA polymerase II"/>
    <property type="evidence" value="ECO:0000266"/>
    <property type="project" value="PomBase"/>
</dbReference>
<dbReference type="CDD" id="cd05840">
    <property type="entry name" value="PWWP_ScIOC4-like"/>
    <property type="match status" value="1"/>
</dbReference>
<dbReference type="FunFam" id="2.30.30.140:FF:000120">
    <property type="entry name" value="PWWP domain-containing protein2"/>
    <property type="match status" value="1"/>
</dbReference>
<dbReference type="Gene3D" id="2.30.30.140">
    <property type="match status" value="1"/>
</dbReference>
<dbReference type="InterPro" id="IPR035503">
    <property type="entry name" value="IOC4-like_PWWP"/>
</dbReference>
<dbReference type="InterPro" id="IPR000313">
    <property type="entry name" value="PWWP_dom"/>
</dbReference>
<dbReference type="Pfam" id="PF00855">
    <property type="entry name" value="PWWP"/>
    <property type="match status" value="1"/>
</dbReference>
<dbReference type="SMART" id="SM00293">
    <property type="entry name" value="PWWP"/>
    <property type="match status" value="1"/>
</dbReference>
<dbReference type="SUPFAM" id="SSF63748">
    <property type="entry name" value="Tudor/PWWP/MBT"/>
    <property type="match status" value="1"/>
</dbReference>
<dbReference type="PROSITE" id="PS50812">
    <property type="entry name" value="PWWP"/>
    <property type="match status" value="1"/>
</dbReference>
<name>PDP1_SCHPO</name>